<keyword id="KW-0067">ATP-binding</keyword>
<keyword id="KW-0963">Cytoplasm</keyword>
<keyword id="KW-0436">Ligase</keyword>
<keyword id="KW-0460">Magnesium</keyword>
<keyword id="KW-0479">Metal-binding</keyword>
<keyword id="KW-0547">Nucleotide-binding</keyword>
<keyword id="KW-1185">Reference proteome</keyword>
<feature type="chain" id="PRO_0000153201" description="Glutamine synthetase">
    <location>
        <begin position="1"/>
        <end position="491"/>
    </location>
</feature>
<feature type="domain" description="GS beta-grasp" evidence="6">
    <location>
        <begin position="23"/>
        <end position="111"/>
    </location>
</feature>
<feature type="domain" description="GS catalytic" evidence="7">
    <location>
        <begin position="119"/>
        <end position="491"/>
    </location>
</feature>
<feature type="binding site" evidence="4">
    <location>
        <position position="143"/>
    </location>
    <ligand>
        <name>Mg(2+)</name>
        <dbReference type="ChEBI" id="CHEBI:18420"/>
        <label>1</label>
    </ligand>
</feature>
<feature type="binding site" evidence="4">
    <location>
        <position position="145"/>
    </location>
    <ligand>
        <name>Mg(2+)</name>
        <dbReference type="ChEBI" id="CHEBI:18420"/>
        <label>2</label>
    </ligand>
</feature>
<feature type="binding site" evidence="4">
    <location>
        <position position="225"/>
    </location>
    <ligand>
        <name>ATP</name>
        <dbReference type="ChEBI" id="CHEBI:30616"/>
    </ligand>
</feature>
<feature type="binding site" evidence="4">
    <location>
        <position position="230"/>
    </location>
    <ligand>
        <name>Mg(2+)</name>
        <dbReference type="ChEBI" id="CHEBI:18420"/>
        <label>2</label>
    </ligand>
</feature>
<feature type="binding site" evidence="4">
    <location>
        <position position="238"/>
    </location>
    <ligand>
        <name>Mg(2+)</name>
        <dbReference type="ChEBI" id="CHEBI:18420"/>
        <label>2</label>
    </ligand>
</feature>
<feature type="binding site" evidence="4">
    <location>
        <begin position="282"/>
        <end position="283"/>
    </location>
    <ligand>
        <name>L-glutamate</name>
        <dbReference type="ChEBI" id="CHEBI:29985"/>
    </ligand>
</feature>
<feature type="binding site" evidence="2">
    <location>
        <position position="283"/>
    </location>
    <ligand>
        <name>L-glutamate</name>
        <dbReference type="ChEBI" id="CHEBI:29985"/>
    </ligand>
</feature>
<feature type="binding site" evidence="4">
    <location>
        <position position="287"/>
    </location>
    <ligand>
        <name>Mg(2+)</name>
        <dbReference type="ChEBI" id="CHEBI:18420"/>
        <label>1</label>
    </ligand>
</feature>
<feature type="binding site" evidence="4">
    <location>
        <begin position="289"/>
        <end position="291"/>
    </location>
    <ligand>
        <name>ATP</name>
        <dbReference type="ChEBI" id="CHEBI:30616"/>
    </ligand>
</feature>
<feature type="binding site" evidence="3">
    <location>
        <position position="291"/>
    </location>
    <ligand>
        <name>ATP</name>
        <dbReference type="ChEBI" id="CHEBI:30616"/>
    </ligand>
</feature>
<feature type="binding site" evidence="4">
    <location>
        <position position="344"/>
    </location>
    <ligand>
        <name>L-glutamate</name>
        <dbReference type="ChEBI" id="CHEBI:29985"/>
    </ligand>
</feature>
<feature type="binding site" evidence="1">
    <location>
        <position position="350"/>
    </location>
    <ligand>
        <name>L-glutamate</name>
        <dbReference type="ChEBI" id="CHEBI:29985"/>
    </ligand>
</feature>
<feature type="binding site" evidence="4">
    <location>
        <position position="362"/>
    </location>
    <ligand>
        <name>ATP</name>
        <dbReference type="ChEBI" id="CHEBI:30616"/>
    </ligand>
</feature>
<feature type="binding site" evidence="4">
    <location>
        <position position="362"/>
    </location>
    <ligand>
        <name>L-glutamate</name>
        <dbReference type="ChEBI" id="CHEBI:29985"/>
    </ligand>
</feature>
<feature type="binding site" evidence="4">
    <location>
        <position position="367"/>
    </location>
    <ligand>
        <name>ATP</name>
        <dbReference type="ChEBI" id="CHEBI:30616"/>
    </ligand>
</feature>
<feature type="binding site" evidence="4">
    <location>
        <position position="381"/>
    </location>
    <ligand>
        <name>Mg(2+)</name>
        <dbReference type="ChEBI" id="CHEBI:18420"/>
        <label>1</label>
    </ligand>
</feature>
<feature type="binding site" evidence="4">
    <location>
        <position position="383"/>
    </location>
    <ligand>
        <name>L-glutamate</name>
        <dbReference type="ChEBI" id="CHEBI:29985"/>
    </ligand>
</feature>
<dbReference type="EC" id="6.3.1.2" evidence="8"/>
<dbReference type="EMBL" id="AE000782">
    <property type="protein sequence ID" value="AAB90294.1"/>
    <property type="molecule type" value="Genomic_DNA"/>
</dbReference>
<dbReference type="PIR" id="E69368">
    <property type="entry name" value="E69368"/>
</dbReference>
<dbReference type="RefSeq" id="WP_010878449.1">
    <property type="nucleotide sequence ID" value="NC_000917.1"/>
</dbReference>
<dbReference type="SMR" id="O29313"/>
<dbReference type="STRING" id="224325.AF_0949"/>
<dbReference type="PaxDb" id="224325-AF_0949"/>
<dbReference type="EnsemblBacteria" id="AAB90294">
    <property type="protein sequence ID" value="AAB90294"/>
    <property type="gene ID" value="AF_0949"/>
</dbReference>
<dbReference type="GeneID" id="1484172"/>
<dbReference type="KEGG" id="afu:AF_0949"/>
<dbReference type="eggNOG" id="arCOG01909">
    <property type="taxonomic scope" value="Archaea"/>
</dbReference>
<dbReference type="HOGENOM" id="CLU_017290_1_2_2"/>
<dbReference type="OrthoDB" id="36124at2157"/>
<dbReference type="PhylomeDB" id="O29313"/>
<dbReference type="BRENDA" id="6.3.1.2">
    <property type="organism ID" value="414"/>
</dbReference>
<dbReference type="Proteomes" id="UP000002199">
    <property type="component" value="Chromosome"/>
</dbReference>
<dbReference type="GO" id="GO:0005737">
    <property type="term" value="C:cytoplasm"/>
    <property type="evidence" value="ECO:0007669"/>
    <property type="project" value="UniProtKB-SubCell"/>
</dbReference>
<dbReference type="GO" id="GO:0016020">
    <property type="term" value="C:membrane"/>
    <property type="evidence" value="ECO:0007669"/>
    <property type="project" value="TreeGrafter"/>
</dbReference>
<dbReference type="GO" id="GO:0005524">
    <property type="term" value="F:ATP binding"/>
    <property type="evidence" value="ECO:0007669"/>
    <property type="project" value="UniProtKB-KW"/>
</dbReference>
<dbReference type="GO" id="GO:0004356">
    <property type="term" value="F:glutamine synthetase activity"/>
    <property type="evidence" value="ECO:0007669"/>
    <property type="project" value="UniProtKB-EC"/>
</dbReference>
<dbReference type="GO" id="GO:0046872">
    <property type="term" value="F:metal ion binding"/>
    <property type="evidence" value="ECO:0007669"/>
    <property type="project" value="UniProtKB-KW"/>
</dbReference>
<dbReference type="GO" id="GO:0006542">
    <property type="term" value="P:glutamine biosynthetic process"/>
    <property type="evidence" value="ECO:0007669"/>
    <property type="project" value="InterPro"/>
</dbReference>
<dbReference type="Gene3D" id="3.10.20.70">
    <property type="entry name" value="Glutamine synthetase, N-terminal domain"/>
    <property type="match status" value="1"/>
</dbReference>
<dbReference type="Gene3D" id="3.30.590.10">
    <property type="entry name" value="Glutamine synthetase/guanido kinase, catalytic domain"/>
    <property type="match status" value="1"/>
</dbReference>
<dbReference type="InterPro" id="IPR008147">
    <property type="entry name" value="Gln_synt_N"/>
</dbReference>
<dbReference type="InterPro" id="IPR036651">
    <property type="entry name" value="Gln_synt_N_sf"/>
</dbReference>
<dbReference type="InterPro" id="IPR014746">
    <property type="entry name" value="Gln_synth/guanido_kin_cat_dom"/>
</dbReference>
<dbReference type="InterPro" id="IPR008146">
    <property type="entry name" value="Gln_synth_cat_dom"/>
</dbReference>
<dbReference type="InterPro" id="IPR027303">
    <property type="entry name" value="Gln_synth_gly_rich_site"/>
</dbReference>
<dbReference type="InterPro" id="IPR004809">
    <property type="entry name" value="Gln_synth_I"/>
</dbReference>
<dbReference type="NCBIfam" id="TIGR00653">
    <property type="entry name" value="GlnA"/>
    <property type="match status" value="1"/>
</dbReference>
<dbReference type="PANTHER" id="PTHR43407">
    <property type="entry name" value="GLUTAMINE SYNTHETASE"/>
    <property type="match status" value="1"/>
</dbReference>
<dbReference type="PANTHER" id="PTHR43407:SF1">
    <property type="entry name" value="LENGSIN"/>
    <property type="match status" value="1"/>
</dbReference>
<dbReference type="Pfam" id="PF00120">
    <property type="entry name" value="Gln-synt_C"/>
    <property type="match status" value="1"/>
</dbReference>
<dbReference type="Pfam" id="PF03951">
    <property type="entry name" value="Gln-synt_N"/>
    <property type="match status" value="1"/>
</dbReference>
<dbReference type="SMART" id="SM01230">
    <property type="entry name" value="Gln-synt_C"/>
    <property type="match status" value="1"/>
</dbReference>
<dbReference type="SUPFAM" id="SSF54368">
    <property type="entry name" value="Glutamine synthetase, N-terminal domain"/>
    <property type="match status" value="1"/>
</dbReference>
<dbReference type="SUPFAM" id="SSF55931">
    <property type="entry name" value="Glutamine synthetase/guanido kinase"/>
    <property type="match status" value="1"/>
</dbReference>
<dbReference type="PROSITE" id="PS00181">
    <property type="entry name" value="GLNA_ATP"/>
    <property type="match status" value="1"/>
</dbReference>
<dbReference type="PROSITE" id="PS51986">
    <property type="entry name" value="GS_BETA_GRASP"/>
    <property type="match status" value="1"/>
</dbReference>
<dbReference type="PROSITE" id="PS51987">
    <property type="entry name" value="GS_CATALYTIC"/>
    <property type="match status" value="1"/>
</dbReference>
<evidence type="ECO:0000250" key="1">
    <source>
        <dbReference type="UniProtKB" id="P0A1P6"/>
    </source>
</evidence>
<evidence type="ECO:0000250" key="2">
    <source>
        <dbReference type="UniProtKB" id="P12425"/>
    </source>
</evidence>
<evidence type="ECO:0000250" key="3">
    <source>
        <dbReference type="UniProtKB" id="P77961"/>
    </source>
</evidence>
<evidence type="ECO:0000250" key="4">
    <source>
        <dbReference type="UniProtKB" id="P9WN39"/>
    </source>
</evidence>
<evidence type="ECO:0000250" key="5">
    <source>
        <dbReference type="UniProtKB" id="Q9HH09"/>
    </source>
</evidence>
<evidence type="ECO:0000255" key="6">
    <source>
        <dbReference type="PROSITE-ProRule" id="PRU01330"/>
    </source>
</evidence>
<evidence type="ECO:0000255" key="7">
    <source>
        <dbReference type="PROSITE-ProRule" id="PRU01331"/>
    </source>
</evidence>
<evidence type="ECO:0000269" key="8">
    <source>
    </source>
</evidence>
<evidence type="ECO:0000303" key="9">
    <source>
    </source>
</evidence>
<reference key="1">
    <citation type="journal article" date="1997" name="Nature">
        <title>The complete genome sequence of the hyperthermophilic, sulphate-reducing archaeon Archaeoglobus fulgidus.</title>
        <authorList>
            <person name="Klenk H.-P."/>
            <person name="Clayton R.A."/>
            <person name="Tomb J.-F."/>
            <person name="White O."/>
            <person name="Nelson K.E."/>
            <person name="Ketchum K.A."/>
            <person name="Dodson R.J."/>
            <person name="Gwinn M.L."/>
            <person name="Hickey E.K."/>
            <person name="Peterson J.D."/>
            <person name="Richardson D.L."/>
            <person name="Kerlavage A.R."/>
            <person name="Graham D.E."/>
            <person name="Kyrpides N.C."/>
            <person name="Fleischmann R.D."/>
            <person name="Quackenbush J."/>
            <person name="Lee N.H."/>
            <person name="Sutton G.G."/>
            <person name="Gill S.R."/>
            <person name="Kirkness E.F."/>
            <person name="Dougherty B.A."/>
            <person name="McKenney K."/>
            <person name="Adams M.D."/>
            <person name="Loftus B.J."/>
            <person name="Peterson S.N."/>
            <person name="Reich C.I."/>
            <person name="McNeil L.K."/>
            <person name="Badger J.H."/>
            <person name="Glodek A."/>
            <person name="Zhou L."/>
            <person name="Overbeek R."/>
            <person name="Gocayne J.D."/>
            <person name="Weidman J.F."/>
            <person name="McDonald L.A."/>
            <person name="Utterback T.R."/>
            <person name="Cotton M.D."/>
            <person name="Spriggs T."/>
            <person name="Artiach P."/>
            <person name="Kaine B.P."/>
            <person name="Sykes S.M."/>
            <person name="Sadow P.W."/>
            <person name="D'Andrea K.P."/>
            <person name="Bowman C."/>
            <person name="Fujii C."/>
            <person name="Garland S.A."/>
            <person name="Mason T.M."/>
            <person name="Olsen G.J."/>
            <person name="Fraser C.M."/>
            <person name="Smith H.O."/>
            <person name="Woese C.R."/>
            <person name="Venter J.C."/>
        </authorList>
    </citation>
    <scope>NUCLEOTIDE SEQUENCE [LARGE SCALE GENOMIC DNA]</scope>
    <source>
        <strain>ATCC 49558 / DSM 4304 / JCM 9628 / NBRC 100126 / VC-16</strain>
    </source>
</reference>
<reference key="2">
    <citation type="journal article" date="2001" name="Appl. Environ. Microbiol.">
        <title>beta-Glutamate as a substrate for glutamine synthetase.</title>
        <authorList>
            <person name="Robinson P."/>
            <person name="Neelon K."/>
            <person name="Schreier H.J."/>
            <person name="Roberts M.F."/>
        </authorList>
    </citation>
    <scope>FUNCTION</scope>
    <scope>CATALYTIC ACTIVITY</scope>
    <scope>BIOPHYSICOCHEMICAL PROPERTIES</scope>
    <scope>SUBSTRATE SPECIFICITY</scope>
</reference>
<sequence>MVRRLRGDCMEEVERAKAVLKENNVRQVLCAFADVRGYLQMFSIPAREFVDGSAFENGIGFDGSSVRGFRTIEKSDMVWMPDASSLKIIPWIDDPIQKSAIMFGNVYEAWGTEIADCDPRGYVAKRYEDMLKSEGMSAIFGPEIEFFLFEGVDFTRLSWDMWVSPNGGAGDSWGPPRIMPISSELESGYMIRPKEGYFRPPPEDTTVEYRNELVYYLEQLGIDIEYHHHEVATAGQVELDFKPKQLVDVGDAFYLYKFAAKNIAAMHGLYATFMPKPLYLDNASGMHTHQSLWKGEPFSGEAVFADPDDEYMLSQKARYYIGGLLEHAKALTALCAPTVNSYKRLVPGFEAPIYICWSPRNRSALVRVPMYVKKPSAIRVEYRGVDPSCNPYLAITAQLAAGLDGIKKKIDPGDPLLEDVYELTPAQKRELGVGELPTTLRDAIDHLASDELMQEVLGSHIFDAFMELKIDEWNQYCLYITPWEFMKYFDI</sequence>
<organism>
    <name type="scientific">Archaeoglobus fulgidus (strain ATCC 49558 / DSM 4304 / JCM 9628 / NBRC 100126 / VC-16)</name>
    <dbReference type="NCBI Taxonomy" id="224325"/>
    <lineage>
        <taxon>Archaea</taxon>
        <taxon>Methanobacteriati</taxon>
        <taxon>Methanobacteriota</taxon>
        <taxon>Archaeoglobi</taxon>
        <taxon>Archaeoglobales</taxon>
        <taxon>Archaeoglobaceae</taxon>
        <taxon>Archaeoglobus</taxon>
    </lineage>
</organism>
<comment type="function">
    <text evidence="8">Probably involved in nitrogen metabolism via ammonium assimilation. Catalyzes the ATP-dependent biosynthesis of glutamine from glutamate and ammonia. Beta-glutamate is a much poorer substrate than alpha-glutamate.</text>
</comment>
<comment type="catalytic activity">
    <reaction evidence="8">
        <text>L-glutamate + NH4(+) + ATP = L-glutamine + ADP + phosphate + H(+)</text>
        <dbReference type="Rhea" id="RHEA:16169"/>
        <dbReference type="ChEBI" id="CHEBI:15378"/>
        <dbReference type="ChEBI" id="CHEBI:28938"/>
        <dbReference type="ChEBI" id="CHEBI:29985"/>
        <dbReference type="ChEBI" id="CHEBI:30616"/>
        <dbReference type="ChEBI" id="CHEBI:43474"/>
        <dbReference type="ChEBI" id="CHEBI:58359"/>
        <dbReference type="ChEBI" id="CHEBI:456216"/>
        <dbReference type="EC" id="6.3.1.2"/>
    </reaction>
</comment>
<comment type="cofactor">
    <cofactor evidence="5">
        <name>Mg(2+)</name>
        <dbReference type="ChEBI" id="CHEBI:18420"/>
    </cofactor>
    <text evidence="4">Binds 2 Mg(2+) ions per subunit.</text>
</comment>
<comment type="biophysicochemical properties">
    <kinetics>
        <KM evidence="8">0.56 mM for ATP</KM>
        <KM evidence="8">3 mM for alpha-glutamate</KM>
    </kinetics>
    <temperatureDependence>
        <text evidence="8">Optimum temperature is 83 degrees Celsius.</text>
    </temperatureDependence>
</comment>
<comment type="subunit">
    <text evidence="5">Oligomer of 12 subunits arranged in the form of two hexagons.</text>
</comment>
<comment type="subcellular location">
    <subcellularLocation>
        <location evidence="5">Cytoplasm</location>
    </subcellularLocation>
</comment>
<comment type="similarity">
    <text evidence="5">Belongs to the glutamine synthetase family.</text>
</comment>
<gene>
    <name evidence="5" type="primary">glnA</name>
    <name type="ordered locus">AF_0949</name>
</gene>
<accession>O29313</accession>
<name>GLNA_ARCFU</name>
<protein>
    <recommendedName>
        <fullName evidence="9">Glutamine synthetase</fullName>
        <shortName evidence="9">GS</shortName>
        <ecNumber evidence="8">6.3.1.2</ecNumber>
    </recommendedName>
    <alternativeName>
        <fullName evidence="5">Glutamate--ammonia ligase</fullName>
    </alternativeName>
    <alternativeName>
        <fullName evidence="9">Glutamine synthetase I alpha</fullName>
        <shortName evidence="9">GSI alpha</shortName>
    </alternativeName>
</protein>
<proteinExistence type="evidence at protein level"/>